<reference key="1">
    <citation type="journal article" date="1997" name="J. Bacteriol.">
        <title>Complete genome sequence of Methanobacterium thermoautotrophicum deltaH: functional analysis and comparative genomics.</title>
        <authorList>
            <person name="Smith D.R."/>
            <person name="Doucette-Stamm L.A."/>
            <person name="Deloughery C."/>
            <person name="Lee H.-M."/>
            <person name="Dubois J."/>
            <person name="Aldredge T."/>
            <person name="Bashirzadeh R."/>
            <person name="Blakely D."/>
            <person name="Cook R."/>
            <person name="Gilbert K."/>
            <person name="Harrison D."/>
            <person name="Hoang L."/>
            <person name="Keagle P."/>
            <person name="Lumm W."/>
            <person name="Pothier B."/>
            <person name="Qiu D."/>
            <person name="Spadafora R."/>
            <person name="Vicare R."/>
            <person name="Wang Y."/>
            <person name="Wierzbowski J."/>
            <person name="Gibson R."/>
            <person name="Jiwani N."/>
            <person name="Caruso A."/>
            <person name="Bush D."/>
            <person name="Safer H."/>
            <person name="Patwell D."/>
            <person name="Prabhakar S."/>
            <person name="McDougall S."/>
            <person name="Shimer G."/>
            <person name="Goyal A."/>
            <person name="Pietrovski S."/>
            <person name="Church G.M."/>
            <person name="Daniels C.J."/>
            <person name="Mao J.-I."/>
            <person name="Rice P."/>
            <person name="Noelling J."/>
            <person name="Reeve J.N."/>
        </authorList>
    </citation>
    <scope>NUCLEOTIDE SEQUENCE [LARGE SCALE GENOMIC DNA]</scope>
    <source>
        <strain>ATCC 29096 / DSM 1053 / JCM 10044 / NBRC 100330 / Delta H</strain>
    </source>
</reference>
<reference key="2">
    <citation type="journal article" date="2002" name="J. Biol. Chem.">
        <title>Cysteine activation is an inherent in vitro property of prolyl-tRNA synthetases.</title>
        <authorList>
            <person name="Ahel I."/>
            <person name="Stathopoulos C."/>
            <person name="Ambrogelly A."/>
            <person name="Sauerwald A."/>
            <person name="Toogood H."/>
            <person name="Hartsch T."/>
            <person name="Soell D."/>
        </authorList>
    </citation>
    <scope>PROLINE AND CYSTEINE ACTIVATION</scope>
    <scope>FUNCTION</scope>
    <scope>CATALYTIC ACTIVITY</scope>
    <scope>KINETIC PARAMETERS</scope>
</reference>
<reference key="3">
    <citation type="journal article" date="2005" name="FEBS Lett.">
        <title>Asymmetric behavior of archaeal prolyl-tRNA synthetase.</title>
        <authorList>
            <person name="Ambrogelly A."/>
            <person name="Kamtekar S."/>
            <person name="Stathopoulos C."/>
            <person name="Kennedy D."/>
            <person name="Soell D."/>
        </authorList>
    </citation>
    <scope>SUBUNIT</scope>
</reference>
<reference key="4">
    <citation type="journal article" date="2005" name="J. Biol. Chem.">
        <title>Association between Archaeal prolyl- and leucyl-tRNA synthetases enhances tRNA(Pro) aminoacylation.</title>
        <authorList>
            <person name="Praetorius-Ibba M."/>
            <person name="Rogers T.E."/>
            <person name="Samson R."/>
            <person name="Kelman Z."/>
            <person name="Ibba M."/>
        </authorList>
    </citation>
    <scope>INTERACTION WITH LEURS</scope>
    <scope>KINETIC PARAMETERS</scope>
</reference>
<reference key="5">
    <citation type="journal article" date="2003" name="Proc. Natl. Acad. Sci. U.S.A.">
        <title>The structural basis of cysteine aminoacylation of tRNAPro by prolyl-tRNA synthetases.</title>
        <authorList>
            <person name="Kamtekar S."/>
            <person name="Kennedy W.D."/>
            <person name="Wang J."/>
            <person name="Stathopoulos C."/>
            <person name="Soell D."/>
            <person name="Steitz T.A."/>
        </authorList>
    </citation>
    <scope>X-RAY CRYSTALLOGRAPHY (2.55 ANGSTROMS) OF APOENZYME AND IN COMPLEX WITH AMINOACYL-ADENYLATE ANALOGS AND ZINC IONS</scope>
    <scope>SUBUNIT</scope>
</reference>
<sequence length="482" mass="55806">MQKPIKKDPNRYHGEKMTEFSEWFHNILEEAEIIDQRYPVKGMHVWMPHGFMIRKNTLKILRRILDRDHEEVLFPLLVPEDELAKEAIHVKGFEDEVYWVTHGGLSKLQRKLALRPTSETVMYPMFALWVRSHTDLPMRFYQVVNTFRYETKHTRPLIRVREITTFKEAHTIHATASEAEEQVERAVEIYKEFFNSLGIPYLITRRPPWDKFPGSEYTVAFDTLMPDGKTLQIGTVHNLGQTFARTFEIKFETPEGDHEYVHQTCYGLSDRVIASVIAIHGDESGLCLPPDVAAHQVVIVPIIFKKAAEEVMEACRELRSRLEAAGFRVHLDDRDIRAGRKYYEWEMRGVPLRVEIGPRDLEKGAAVISRRDTGEKVTADLQGIEETLRELMKDILENLRTRAWERMESEIREAETLEEASRIVDEKRGIISFMWCGEEECGMDVEEKVRVDILGIQEEGSGTCINCGREAPTGLTLPEHIS</sequence>
<accession>O26708</accession>
<proteinExistence type="evidence at protein level"/>
<gene>
    <name type="primary">proS</name>
    <name type="ordered locus">MTH_611</name>
</gene>
<protein>
    <recommendedName>
        <fullName evidence="2 8">Proline--tRNA ligase</fullName>
        <ecNumber evidence="2 3">6.1.1.15</ecNumber>
    </recommendedName>
    <alternativeName>
        <fullName evidence="2 7">Prolyl-tRNA synthetase</fullName>
        <shortName evidence="2 7">ProRS</shortName>
    </alternativeName>
</protein>
<feature type="chain" id="PRO_0000139352" description="Proline--tRNA ligase">
    <location>
        <begin position="1"/>
        <end position="482"/>
    </location>
</feature>
<feature type="region of interest" description="Interaction with tRNA" evidence="1">
    <location>
        <begin position="346"/>
        <end position="376"/>
    </location>
</feature>
<feature type="binding site" evidence="9">
    <location>
        <position position="117"/>
    </location>
    <ligand>
        <name>L-proline</name>
        <dbReference type="ChEBI" id="CHEBI:60039"/>
    </ligand>
</feature>
<feature type="binding site" evidence="9">
    <location>
        <position position="119"/>
    </location>
    <ligand>
        <name>L-proline</name>
        <dbReference type="ChEBI" id="CHEBI:60039"/>
    </ligand>
</feature>
<feature type="binding site" evidence="9">
    <location>
        <position position="148"/>
    </location>
    <ligand>
        <name>ATP</name>
        <dbReference type="ChEBI" id="CHEBI:30616"/>
    </ligand>
</feature>
<feature type="binding site" evidence="9">
    <location>
        <position position="148"/>
    </location>
    <ligand>
        <name>L-proline</name>
        <dbReference type="ChEBI" id="CHEBI:60039"/>
    </ligand>
</feature>
<feature type="binding site" evidence="9">
    <location>
        <position position="150"/>
    </location>
    <ligand>
        <name>ATP</name>
        <dbReference type="ChEBI" id="CHEBI:30616"/>
    </ligand>
</feature>
<feature type="binding site" evidence="9">
    <location>
        <position position="232"/>
    </location>
    <ligand>
        <name>ATP</name>
        <dbReference type="ChEBI" id="CHEBI:30616"/>
    </ligand>
</feature>
<feature type="binding site" evidence="9">
    <location>
        <position position="235"/>
    </location>
    <ligand>
        <name>ATP</name>
        <dbReference type="ChEBI" id="CHEBI:30616"/>
    </ligand>
</feature>
<feature type="binding site" evidence="9">
    <location>
        <position position="237"/>
    </location>
    <ligand>
        <name>L-proline</name>
        <dbReference type="ChEBI" id="CHEBI:60039"/>
    </ligand>
</feature>
<feature type="binding site" evidence="9">
    <location>
        <position position="269"/>
    </location>
    <ligand>
        <name>ATP</name>
        <dbReference type="ChEBI" id="CHEBI:30616"/>
    </ligand>
</feature>
<feature type="binding site" evidence="4">
    <location>
        <position position="436"/>
    </location>
    <ligand>
        <name>Zn(2+)</name>
        <dbReference type="ChEBI" id="CHEBI:29105"/>
        <note>structural</note>
    </ligand>
</feature>
<feature type="binding site" evidence="4">
    <location>
        <position position="441"/>
    </location>
    <ligand>
        <name>Zn(2+)</name>
        <dbReference type="ChEBI" id="CHEBI:29105"/>
        <note>structural</note>
    </ligand>
</feature>
<feature type="binding site" evidence="4">
    <location>
        <position position="464"/>
    </location>
    <ligand>
        <name>Zn(2+)</name>
        <dbReference type="ChEBI" id="CHEBI:29105"/>
        <note>structural</note>
    </ligand>
</feature>
<feature type="binding site" evidence="4">
    <location>
        <position position="467"/>
    </location>
    <ligand>
        <name>Zn(2+)</name>
        <dbReference type="ChEBI" id="CHEBI:29105"/>
        <note>structural</note>
    </ligand>
</feature>
<feature type="helix" evidence="10">
    <location>
        <begin position="20"/>
        <end position="30"/>
    </location>
</feature>
<feature type="strand" evidence="12">
    <location>
        <begin position="33"/>
        <end position="35"/>
    </location>
</feature>
<feature type="helix" evidence="10">
    <location>
        <begin position="48"/>
        <end position="65"/>
    </location>
</feature>
<feature type="turn" evidence="10">
    <location>
        <begin position="66"/>
        <end position="68"/>
    </location>
</feature>
<feature type="strand" evidence="10">
    <location>
        <begin position="76"/>
        <end position="79"/>
    </location>
</feature>
<feature type="helix" evidence="10">
    <location>
        <begin position="80"/>
        <end position="83"/>
    </location>
</feature>
<feature type="helix" evidence="10">
    <location>
        <begin position="87"/>
        <end position="92"/>
    </location>
</feature>
<feature type="turn" evidence="10">
    <location>
        <begin position="93"/>
        <end position="96"/>
    </location>
</feature>
<feature type="strand" evidence="10">
    <location>
        <begin position="99"/>
        <end position="103"/>
    </location>
</feature>
<feature type="strand" evidence="10">
    <location>
        <begin position="106"/>
        <end position="114"/>
    </location>
</feature>
<feature type="strand" evidence="10">
    <location>
        <begin position="116"/>
        <end position="118"/>
    </location>
</feature>
<feature type="helix" evidence="10">
    <location>
        <begin position="119"/>
        <end position="129"/>
    </location>
</feature>
<feature type="turn" evidence="10">
    <location>
        <begin position="133"/>
        <end position="135"/>
    </location>
</feature>
<feature type="strand" evidence="10">
    <location>
        <begin position="138"/>
        <end position="147"/>
    </location>
</feature>
<feature type="turn" evidence="10">
    <location>
        <begin position="156"/>
        <end position="158"/>
    </location>
</feature>
<feature type="strand" evidence="10">
    <location>
        <begin position="161"/>
        <end position="175"/>
    </location>
</feature>
<feature type="helix" evidence="10">
    <location>
        <begin position="176"/>
        <end position="196"/>
    </location>
</feature>
<feature type="strand" evidence="10">
    <location>
        <begin position="202"/>
        <end position="205"/>
    </location>
</feature>
<feature type="turn" evidence="10">
    <location>
        <begin position="208"/>
        <end position="210"/>
    </location>
</feature>
<feature type="strand" evidence="10">
    <location>
        <begin position="216"/>
        <end position="224"/>
    </location>
</feature>
<feature type="strand" evidence="10">
    <location>
        <begin position="230"/>
        <end position="240"/>
    </location>
</feature>
<feature type="helix" evidence="10">
    <location>
        <begin position="242"/>
        <end position="247"/>
    </location>
</feature>
<feature type="strand" evidence="10">
    <location>
        <begin position="250"/>
        <end position="252"/>
    </location>
</feature>
<feature type="strand" evidence="11">
    <location>
        <begin position="254"/>
        <end position="256"/>
    </location>
</feature>
<feature type="strand" evidence="10">
    <location>
        <begin position="258"/>
        <end position="260"/>
    </location>
</feature>
<feature type="strand" evidence="10">
    <location>
        <begin position="262"/>
        <end position="268"/>
    </location>
</feature>
<feature type="helix" evidence="10">
    <location>
        <begin position="271"/>
        <end position="279"/>
    </location>
</feature>
<feature type="strand" evidence="10">
    <location>
        <begin position="283"/>
        <end position="287"/>
    </location>
</feature>
<feature type="turn" evidence="10">
    <location>
        <begin position="290"/>
        <end position="292"/>
    </location>
</feature>
<feature type="strand" evidence="10">
    <location>
        <begin position="296"/>
        <end position="301"/>
    </location>
</feature>
<feature type="strand" evidence="10">
    <location>
        <begin position="304"/>
        <end position="307"/>
    </location>
</feature>
<feature type="helix" evidence="10">
    <location>
        <begin position="308"/>
        <end position="323"/>
    </location>
</feature>
<feature type="turn" evidence="10">
    <location>
        <begin position="324"/>
        <end position="326"/>
    </location>
</feature>
<feature type="strand" evidence="10">
    <location>
        <begin position="329"/>
        <end position="331"/>
    </location>
</feature>
<feature type="helix" evidence="10">
    <location>
        <begin position="338"/>
        <end position="347"/>
    </location>
</feature>
<feature type="strand" evidence="10">
    <location>
        <begin position="351"/>
        <end position="356"/>
    </location>
</feature>
<feature type="helix" evidence="10">
    <location>
        <begin position="358"/>
        <end position="361"/>
    </location>
</feature>
<feature type="turn" evidence="10">
    <location>
        <begin position="362"/>
        <end position="364"/>
    </location>
</feature>
<feature type="strand" evidence="10">
    <location>
        <begin position="365"/>
        <end position="373"/>
    </location>
</feature>
<feature type="strand" evidence="10">
    <location>
        <begin position="376"/>
        <end position="380"/>
    </location>
</feature>
<feature type="turn" evidence="10">
    <location>
        <begin position="381"/>
        <end position="383"/>
    </location>
</feature>
<feature type="helix" evidence="10">
    <location>
        <begin position="384"/>
        <end position="408"/>
    </location>
</feature>
<feature type="strand" evidence="10">
    <location>
        <begin position="411"/>
        <end position="413"/>
    </location>
</feature>
<feature type="helix" evidence="10">
    <location>
        <begin position="417"/>
        <end position="427"/>
    </location>
</feature>
<feature type="strand" evidence="10">
    <location>
        <begin position="429"/>
        <end position="435"/>
    </location>
</feature>
<feature type="helix" evidence="10">
    <location>
        <begin position="439"/>
        <end position="449"/>
    </location>
</feature>
<feature type="strand" evidence="10">
    <location>
        <begin position="452"/>
        <end position="458"/>
    </location>
</feature>
<feature type="turn" evidence="10">
    <location>
        <begin position="465"/>
        <end position="467"/>
    </location>
</feature>
<comment type="function">
    <text evidence="3">Catalyzes the attachment of proline to tRNA(Pro) in a two-step reaction: proline is first activated by ATP to form Pro-AMP and then transferred to the acceptor end of tRNA(Pro). Can inadvertently accommodate and process cysteine.</text>
</comment>
<comment type="catalytic activity">
    <reaction evidence="2 3">
        <text>tRNA(Pro) + L-proline + ATP = L-prolyl-tRNA(Pro) + AMP + diphosphate</text>
        <dbReference type="Rhea" id="RHEA:14305"/>
        <dbReference type="Rhea" id="RHEA-COMP:9700"/>
        <dbReference type="Rhea" id="RHEA-COMP:9702"/>
        <dbReference type="ChEBI" id="CHEBI:30616"/>
        <dbReference type="ChEBI" id="CHEBI:33019"/>
        <dbReference type="ChEBI" id="CHEBI:60039"/>
        <dbReference type="ChEBI" id="CHEBI:78442"/>
        <dbReference type="ChEBI" id="CHEBI:78532"/>
        <dbReference type="ChEBI" id="CHEBI:456215"/>
        <dbReference type="EC" id="6.1.1.15"/>
    </reaction>
</comment>
<comment type="biophysicochemical properties">
    <kinetics>
        <KM evidence="3 5">0.26 mM for proline (at 60 degrees Celsius)</KM>
        <KM evidence="3 5">0.05 mM for cysteine (at 60 degrees Celsius)</KM>
        <KM evidence="3 5">4.1 uM for tRNA(Pro) (at 50 degrees Celsius)</KM>
        <KM evidence="3 5">2.2 uM for tRNA(Pro) (at 50 degrees Celsius in the presence of LeuRS)</KM>
    </kinetics>
</comment>
<comment type="subunit">
    <text evidence="4 5 6">Homodimer. The dimer is functionally asymmetric: only one of the two active sites at a time is able to form prolyl-adenylate, and only one tRNA molecule binds per dimer. Interacts with LeuRS, which enhances tRNA(Pro) aminoacylation.</text>
</comment>
<comment type="interaction">
    <interactant intactId="EBI-7963357">
        <id>O26708</id>
    </interactant>
    <interactant intactId="EBI-7963108">
        <id>O27552</id>
        <label>leuS</label>
    </interactant>
    <organismsDiffer>false</organismsDiffer>
    <experiments>3</experiments>
</comment>
<comment type="subcellular location">
    <subcellularLocation>
        <location evidence="2">Cytoplasm</location>
    </subcellularLocation>
</comment>
<comment type="domain">
    <text>Consists of three domains: the N-terminal catalytic domain, the anticodon-binding domain and the C-terminal extension. The C-terminal extension binds a zinc ion, which probably plays a non-essential structural role in stabilizing the fold of C-terminal domain.</text>
</comment>
<comment type="similarity">
    <text evidence="2 8">Belongs to the class-II aminoacyl-tRNA synthetase family. ProS type 3 subfamily.</text>
</comment>
<organism>
    <name type="scientific">Methanothermobacter thermautotrophicus (strain ATCC 29096 / DSM 1053 / JCM 10044 / NBRC 100330 / Delta H)</name>
    <name type="common">Methanobacterium thermoautotrophicum</name>
    <dbReference type="NCBI Taxonomy" id="187420"/>
    <lineage>
        <taxon>Archaea</taxon>
        <taxon>Methanobacteriati</taxon>
        <taxon>Methanobacteriota</taxon>
        <taxon>Methanomada group</taxon>
        <taxon>Methanobacteria</taxon>
        <taxon>Methanobacteriales</taxon>
        <taxon>Methanobacteriaceae</taxon>
        <taxon>Methanothermobacter</taxon>
    </lineage>
</organism>
<name>SYP_METTH</name>
<keyword id="KW-0002">3D-structure</keyword>
<keyword id="KW-0030">Aminoacyl-tRNA synthetase</keyword>
<keyword id="KW-0067">ATP-binding</keyword>
<keyword id="KW-0963">Cytoplasm</keyword>
<keyword id="KW-0436">Ligase</keyword>
<keyword id="KW-0479">Metal-binding</keyword>
<keyword id="KW-0547">Nucleotide-binding</keyword>
<keyword id="KW-0648">Protein biosynthesis</keyword>
<keyword id="KW-1185">Reference proteome</keyword>
<keyword id="KW-0862">Zinc</keyword>
<evidence type="ECO:0000250" key="1"/>
<evidence type="ECO:0000255" key="2">
    <source>
        <dbReference type="HAMAP-Rule" id="MF_01571"/>
    </source>
</evidence>
<evidence type="ECO:0000269" key="3">
    <source>
    </source>
</evidence>
<evidence type="ECO:0000269" key="4">
    <source>
    </source>
</evidence>
<evidence type="ECO:0000269" key="5">
    <source>
    </source>
</evidence>
<evidence type="ECO:0000269" key="6">
    <source>
    </source>
</evidence>
<evidence type="ECO:0000303" key="7">
    <source>
    </source>
</evidence>
<evidence type="ECO:0000305" key="8"/>
<evidence type="ECO:0000305" key="9">
    <source>
    </source>
</evidence>
<evidence type="ECO:0007829" key="10">
    <source>
        <dbReference type="PDB" id="1NJ1"/>
    </source>
</evidence>
<evidence type="ECO:0007829" key="11">
    <source>
        <dbReference type="PDB" id="1NJ5"/>
    </source>
</evidence>
<evidence type="ECO:0007829" key="12">
    <source>
        <dbReference type="PDB" id="1NJ6"/>
    </source>
</evidence>
<dbReference type="EC" id="6.1.1.15" evidence="2 3"/>
<dbReference type="EMBL" id="AE000666">
    <property type="protein sequence ID" value="AAB85117.1"/>
    <property type="molecule type" value="Genomic_DNA"/>
</dbReference>
<dbReference type="PIR" id="C69181">
    <property type="entry name" value="C69181"/>
</dbReference>
<dbReference type="PDB" id="1NJ1">
    <property type="method" value="X-ray"/>
    <property type="resolution" value="2.55 A"/>
    <property type="chains" value="A=1-472"/>
</dbReference>
<dbReference type="PDB" id="1NJ2">
    <property type="method" value="X-ray"/>
    <property type="resolution" value="3.11 A"/>
    <property type="chains" value="A=1-472"/>
</dbReference>
<dbReference type="PDB" id="1NJ5">
    <property type="method" value="X-ray"/>
    <property type="resolution" value="2.80 A"/>
    <property type="chains" value="A=1-472"/>
</dbReference>
<dbReference type="PDB" id="1NJ6">
    <property type="method" value="X-ray"/>
    <property type="resolution" value="2.85 A"/>
    <property type="chains" value="A=1-472"/>
</dbReference>
<dbReference type="PDBsum" id="1NJ1"/>
<dbReference type="PDBsum" id="1NJ2"/>
<dbReference type="PDBsum" id="1NJ5"/>
<dbReference type="PDBsum" id="1NJ6"/>
<dbReference type="SMR" id="O26708"/>
<dbReference type="FunCoup" id="O26708">
    <property type="interactions" value="148"/>
</dbReference>
<dbReference type="IntAct" id="O26708">
    <property type="interactions" value="1"/>
</dbReference>
<dbReference type="MINT" id="O26708"/>
<dbReference type="STRING" id="187420.MTH_611"/>
<dbReference type="PaxDb" id="187420-MTH_611"/>
<dbReference type="EnsemblBacteria" id="AAB85117">
    <property type="protein sequence ID" value="AAB85117"/>
    <property type="gene ID" value="MTH_611"/>
</dbReference>
<dbReference type="KEGG" id="mth:MTH_611"/>
<dbReference type="PATRIC" id="fig|187420.15.peg.592"/>
<dbReference type="HOGENOM" id="CLU_001882_4_2_2"/>
<dbReference type="InParanoid" id="O26708"/>
<dbReference type="SABIO-RK" id="O26708"/>
<dbReference type="EvolutionaryTrace" id="O26708"/>
<dbReference type="Proteomes" id="UP000005223">
    <property type="component" value="Chromosome"/>
</dbReference>
<dbReference type="GO" id="GO:0017101">
    <property type="term" value="C:aminoacyl-tRNA synthetase multienzyme complex"/>
    <property type="evidence" value="ECO:0007669"/>
    <property type="project" value="TreeGrafter"/>
</dbReference>
<dbReference type="GO" id="GO:0005737">
    <property type="term" value="C:cytoplasm"/>
    <property type="evidence" value="ECO:0007669"/>
    <property type="project" value="UniProtKB-SubCell"/>
</dbReference>
<dbReference type="GO" id="GO:0005524">
    <property type="term" value="F:ATP binding"/>
    <property type="evidence" value="ECO:0007669"/>
    <property type="project" value="UniProtKB-UniRule"/>
</dbReference>
<dbReference type="GO" id="GO:0046872">
    <property type="term" value="F:metal ion binding"/>
    <property type="evidence" value="ECO:0007669"/>
    <property type="project" value="UniProtKB-KW"/>
</dbReference>
<dbReference type="GO" id="GO:0004827">
    <property type="term" value="F:proline-tRNA ligase activity"/>
    <property type="evidence" value="ECO:0007669"/>
    <property type="project" value="UniProtKB-UniRule"/>
</dbReference>
<dbReference type="GO" id="GO:0006433">
    <property type="term" value="P:prolyl-tRNA aminoacylation"/>
    <property type="evidence" value="ECO:0007669"/>
    <property type="project" value="UniProtKB-UniRule"/>
</dbReference>
<dbReference type="CDD" id="cd00862">
    <property type="entry name" value="ProRS_anticodon_zinc"/>
    <property type="match status" value="1"/>
</dbReference>
<dbReference type="CDD" id="cd00778">
    <property type="entry name" value="ProRS_core_arch_euk"/>
    <property type="match status" value="1"/>
</dbReference>
<dbReference type="FunFam" id="3.40.50.800:FF:000005">
    <property type="entry name" value="bifunctional glutamate/proline--tRNA ligase"/>
    <property type="match status" value="1"/>
</dbReference>
<dbReference type="FunFam" id="3.30.930.10:FF:000037">
    <property type="entry name" value="Proline--tRNA ligase"/>
    <property type="match status" value="1"/>
</dbReference>
<dbReference type="Gene3D" id="3.40.50.800">
    <property type="entry name" value="Anticodon-binding domain"/>
    <property type="match status" value="1"/>
</dbReference>
<dbReference type="Gene3D" id="3.30.930.10">
    <property type="entry name" value="Bira Bifunctional Protein, Domain 2"/>
    <property type="match status" value="1"/>
</dbReference>
<dbReference type="Gene3D" id="3.30.110.30">
    <property type="entry name" value="C-terminal domain of ProRS"/>
    <property type="match status" value="1"/>
</dbReference>
<dbReference type="HAMAP" id="MF_01571">
    <property type="entry name" value="Pro_tRNA_synth_type3"/>
    <property type="match status" value="1"/>
</dbReference>
<dbReference type="InterPro" id="IPR002314">
    <property type="entry name" value="aa-tRNA-synt_IIb"/>
</dbReference>
<dbReference type="InterPro" id="IPR006195">
    <property type="entry name" value="aa-tRNA-synth_II"/>
</dbReference>
<dbReference type="InterPro" id="IPR045864">
    <property type="entry name" value="aa-tRNA-synth_II/BPL/LPL"/>
</dbReference>
<dbReference type="InterPro" id="IPR004154">
    <property type="entry name" value="Anticodon-bd"/>
</dbReference>
<dbReference type="InterPro" id="IPR036621">
    <property type="entry name" value="Anticodon-bd_dom_sf"/>
</dbReference>
<dbReference type="InterPro" id="IPR002316">
    <property type="entry name" value="Pro-tRNA-ligase_IIa"/>
</dbReference>
<dbReference type="InterPro" id="IPR004499">
    <property type="entry name" value="Pro-tRNA-ligase_IIa_arc-type"/>
</dbReference>
<dbReference type="InterPro" id="IPR016061">
    <property type="entry name" value="Pro-tRNA_ligase_II_C"/>
</dbReference>
<dbReference type="InterPro" id="IPR017449">
    <property type="entry name" value="Pro-tRNA_synth_II"/>
</dbReference>
<dbReference type="InterPro" id="IPR033721">
    <property type="entry name" value="ProRS_core_arch_euk"/>
</dbReference>
<dbReference type="NCBIfam" id="TIGR00408">
    <property type="entry name" value="proS_fam_I"/>
    <property type="match status" value="1"/>
</dbReference>
<dbReference type="PANTHER" id="PTHR43382:SF2">
    <property type="entry name" value="BIFUNCTIONAL GLUTAMATE_PROLINE--TRNA LIGASE"/>
    <property type="match status" value="1"/>
</dbReference>
<dbReference type="PANTHER" id="PTHR43382">
    <property type="entry name" value="PROLYL-TRNA SYNTHETASE"/>
    <property type="match status" value="1"/>
</dbReference>
<dbReference type="Pfam" id="PF03129">
    <property type="entry name" value="HGTP_anticodon"/>
    <property type="match status" value="1"/>
</dbReference>
<dbReference type="Pfam" id="PF09180">
    <property type="entry name" value="ProRS-C_1"/>
    <property type="match status" value="1"/>
</dbReference>
<dbReference type="Pfam" id="PF00587">
    <property type="entry name" value="tRNA-synt_2b"/>
    <property type="match status" value="1"/>
</dbReference>
<dbReference type="PRINTS" id="PR01046">
    <property type="entry name" value="TRNASYNTHPRO"/>
</dbReference>
<dbReference type="SMART" id="SM00946">
    <property type="entry name" value="ProRS-C_1"/>
    <property type="match status" value="1"/>
</dbReference>
<dbReference type="SUPFAM" id="SSF64586">
    <property type="entry name" value="C-terminal domain of ProRS"/>
    <property type="match status" value="1"/>
</dbReference>
<dbReference type="SUPFAM" id="SSF52954">
    <property type="entry name" value="Class II aaRS ABD-related"/>
    <property type="match status" value="1"/>
</dbReference>
<dbReference type="SUPFAM" id="SSF55681">
    <property type="entry name" value="Class II aaRS and biotin synthetases"/>
    <property type="match status" value="1"/>
</dbReference>
<dbReference type="PROSITE" id="PS50862">
    <property type="entry name" value="AA_TRNA_LIGASE_II"/>
    <property type="match status" value="1"/>
</dbReference>